<feature type="chain" id="PRO_0000094075" description="Modulator of FtsH protease HflC">
    <location>
        <begin position="1"/>
        <end position="334"/>
    </location>
</feature>
<feature type="topological domain" description="Cytoplasmic" evidence="1">
    <location>
        <begin position="1"/>
        <end position="2"/>
    </location>
</feature>
<feature type="transmembrane region" description="Helical" evidence="1">
    <location>
        <begin position="3"/>
        <end position="23"/>
    </location>
</feature>
<feature type="topological domain" description="Periplasmic" evidence="1">
    <location>
        <begin position="24"/>
        <end position="334"/>
    </location>
</feature>
<dbReference type="EMBL" id="AE014075">
    <property type="protein sequence ID" value="AAN83681.1"/>
    <property type="molecule type" value="Genomic_DNA"/>
</dbReference>
<dbReference type="RefSeq" id="WP_001232412.1">
    <property type="nucleotide sequence ID" value="NZ_CP051263.1"/>
</dbReference>
<dbReference type="SMR" id="P0ABC4"/>
<dbReference type="STRING" id="199310.c5259"/>
<dbReference type="MEROPS" id="I87.001"/>
<dbReference type="GeneID" id="93777646"/>
<dbReference type="KEGG" id="ecc:c5259"/>
<dbReference type="eggNOG" id="COG0330">
    <property type="taxonomic scope" value="Bacteria"/>
</dbReference>
<dbReference type="HOGENOM" id="CLU_059167_3_0_6"/>
<dbReference type="BioCyc" id="ECOL199310:C5259-MONOMER"/>
<dbReference type="Proteomes" id="UP000001410">
    <property type="component" value="Chromosome"/>
</dbReference>
<dbReference type="GO" id="GO:0005886">
    <property type="term" value="C:plasma membrane"/>
    <property type="evidence" value="ECO:0007669"/>
    <property type="project" value="UniProtKB-SubCell"/>
</dbReference>
<dbReference type="CDD" id="cd03405">
    <property type="entry name" value="SPFH_HflC"/>
    <property type="match status" value="1"/>
</dbReference>
<dbReference type="Gene3D" id="3.30.479.30">
    <property type="entry name" value="Band 7 domain"/>
    <property type="match status" value="1"/>
</dbReference>
<dbReference type="InterPro" id="IPR001107">
    <property type="entry name" value="Band_7"/>
</dbReference>
<dbReference type="InterPro" id="IPR036013">
    <property type="entry name" value="Band_7/SPFH_dom_sf"/>
</dbReference>
<dbReference type="InterPro" id="IPR010200">
    <property type="entry name" value="HflC"/>
</dbReference>
<dbReference type="NCBIfam" id="TIGR01932">
    <property type="entry name" value="hflC"/>
    <property type="match status" value="1"/>
</dbReference>
<dbReference type="NCBIfam" id="NF008259">
    <property type="entry name" value="PRK11029.1"/>
    <property type="match status" value="1"/>
</dbReference>
<dbReference type="PANTHER" id="PTHR42911">
    <property type="entry name" value="MODULATOR OF FTSH PROTEASE HFLC"/>
    <property type="match status" value="1"/>
</dbReference>
<dbReference type="PANTHER" id="PTHR42911:SF1">
    <property type="entry name" value="MODULATOR OF FTSH PROTEASE HFLC"/>
    <property type="match status" value="1"/>
</dbReference>
<dbReference type="Pfam" id="PF01145">
    <property type="entry name" value="Band_7"/>
    <property type="match status" value="1"/>
</dbReference>
<dbReference type="PIRSF" id="PIRSF005651">
    <property type="entry name" value="HflC"/>
    <property type="match status" value="1"/>
</dbReference>
<dbReference type="SMART" id="SM00244">
    <property type="entry name" value="PHB"/>
    <property type="match status" value="1"/>
</dbReference>
<dbReference type="SUPFAM" id="SSF117892">
    <property type="entry name" value="Band 7/SPFH domain"/>
    <property type="match status" value="2"/>
</dbReference>
<proteinExistence type="inferred from homology"/>
<name>HFLC_ECOL6</name>
<reference key="1">
    <citation type="journal article" date="2002" name="Proc. Natl. Acad. Sci. U.S.A.">
        <title>Extensive mosaic structure revealed by the complete genome sequence of uropathogenic Escherichia coli.</title>
        <authorList>
            <person name="Welch R.A."/>
            <person name="Burland V."/>
            <person name="Plunkett G. III"/>
            <person name="Redford P."/>
            <person name="Roesch P."/>
            <person name="Rasko D."/>
            <person name="Buckles E.L."/>
            <person name="Liou S.-R."/>
            <person name="Boutin A."/>
            <person name="Hackett J."/>
            <person name="Stroud D."/>
            <person name="Mayhew G.F."/>
            <person name="Rose D.J."/>
            <person name="Zhou S."/>
            <person name="Schwartz D.C."/>
            <person name="Perna N.T."/>
            <person name="Mobley H.L.T."/>
            <person name="Donnenberg M.S."/>
            <person name="Blattner F.R."/>
        </authorList>
    </citation>
    <scope>NUCLEOTIDE SEQUENCE [LARGE SCALE GENOMIC DNA]</scope>
    <source>
        <strain>CFT073 / ATCC 700928 / UPEC</strain>
    </source>
</reference>
<protein>
    <recommendedName>
        <fullName>Modulator of FtsH protease HflC</fullName>
    </recommendedName>
</protein>
<gene>
    <name type="primary">hflC</name>
    <name type="ordered locus">c5259</name>
</gene>
<comment type="function">
    <text evidence="1">HflC and HflK help govern the stability of phage lambda cII protein, and thereby control the lysogenization frequency of phage lambda. HflKC inhibits the SecY-degrading activity of FtsH, possibly helping quality control of integral membrane proteins (By similarity).</text>
</comment>
<comment type="subunit">
    <text evidence="1">HflC and HflK interact to form a complex, originally called HflA, now called HflKC. HflKC interacts with FtsH; complex formation is stimulated by ATP, and with YccA (By similarity).</text>
</comment>
<comment type="subcellular location">
    <subcellularLocation>
        <location evidence="1">Cell inner membrane</location>
        <topology evidence="1">Single-pass type II membrane protein</topology>
    </subcellularLocation>
</comment>
<comment type="similarity">
    <text evidence="2">Belongs to the band 7/mec-2 family. HflC subfamily.</text>
</comment>
<organism>
    <name type="scientific">Escherichia coli O6:H1 (strain CFT073 / ATCC 700928 / UPEC)</name>
    <dbReference type="NCBI Taxonomy" id="199310"/>
    <lineage>
        <taxon>Bacteria</taxon>
        <taxon>Pseudomonadati</taxon>
        <taxon>Pseudomonadota</taxon>
        <taxon>Gammaproteobacteria</taxon>
        <taxon>Enterobacterales</taxon>
        <taxon>Enterobacteriaceae</taxon>
        <taxon>Escherichia</taxon>
    </lineage>
</organism>
<evidence type="ECO:0000250" key="1"/>
<evidence type="ECO:0000305" key="2"/>
<sequence>MRKSVIAIIIIVLVVLYMSVFVVKEGERGITLRFGKVLRDDDNKPLVYEPGLHFKIPFIETVKMLDARIQTMDNQADRFVTKEKKDLIVDSYIKWRISDFSRYYLATGGGDISQAEVLLKRKFSDRLRSEIGRLDVKDIVTDSRGRLTLEVRDALNSGSAGTEDEVTTPAADNAIAEAAERVTAETKGKVPVINPNSMAALGIEVVDVRIKQINLPTEVSEAIYNRMRAEREAVARRHRSQGQEEAEKLRATADYEVTRTLAEAERQGRIMRGEGDAEAAKLFADAFSKDPDFYAFIRSLRAYENSFSGNQDVMVMSPDSDFFRYMKTPTSATR</sequence>
<accession>P0ABC4</accession>
<accession>P25661</accession>
<keyword id="KW-0997">Cell inner membrane</keyword>
<keyword id="KW-1003">Cell membrane</keyword>
<keyword id="KW-0472">Membrane</keyword>
<keyword id="KW-1185">Reference proteome</keyword>
<keyword id="KW-0735">Signal-anchor</keyword>
<keyword id="KW-0812">Transmembrane</keyword>
<keyword id="KW-1133">Transmembrane helix</keyword>